<evidence type="ECO:0000256" key="1">
    <source>
        <dbReference type="SAM" id="MobiDB-lite"/>
    </source>
</evidence>
<organism>
    <name type="scientific">Caenorhabditis elegans</name>
    <dbReference type="NCBI Taxonomy" id="6239"/>
    <lineage>
        <taxon>Eukaryota</taxon>
        <taxon>Metazoa</taxon>
        <taxon>Ecdysozoa</taxon>
        <taxon>Nematoda</taxon>
        <taxon>Chromadorea</taxon>
        <taxon>Rhabditida</taxon>
        <taxon>Rhabditina</taxon>
        <taxon>Rhabditomorpha</taxon>
        <taxon>Rhabditoidea</taxon>
        <taxon>Rhabditidae</taxon>
        <taxon>Peloderinae</taxon>
        <taxon>Caenorhabditis</taxon>
    </lineage>
</organism>
<keyword id="KW-1185">Reference proteome</keyword>
<dbReference type="EMBL" id="FO080103">
    <property type="protein sequence ID" value="CCD61231.1"/>
    <property type="molecule type" value="Genomic_DNA"/>
</dbReference>
<dbReference type="PIR" id="T29038">
    <property type="entry name" value="T29038"/>
</dbReference>
<dbReference type="RefSeq" id="NP_495191.1">
    <property type="nucleotide sequence ID" value="NM_062790.4"/>
</dbReference>
<dbReference type="FunCoup" id="Q10912">
    <property type="interactions" value="1515"/>
</dbReference>
<dbReference type="PaxDb" id="6239-B0034.4"/>
<dbReference type="EnsemblMetazoa" id="B0034.4.1">
    <property type="protein sequence ID" value="B0034.4.1"/>
    <property type="gene ID" value="WBGene00015004"/>
</dbReference>
<dbReference type="GeneID" id="181819"/>
<dbReference type="KEGG" id="cel:CELE_B0034.4"/>
<dbReference type="UCSC" id="B0034.4">
    <property type="organism name" value="c. elegans"/>
</dbReference>
<dbReference type="AGR" id="WB:WBGene00015004"/>
<dbReference type="CTD" id="181819"/>
<dbReference type="WormBase" id="B0034.4">
    <property type="protein sequence ID" value="CE02412"/>
    <property type="gene ID" value="WBGene00015004"/>
</dbReference>
<dbReference type="HOGENOM" id="CLU_1278646_0_0_1"/>
<dbReference type="InParanoid" id="Q10912"/>
<dbReference type="OrthoDB" id="5875758at2759"/>
<dbReference type="PRO" id="PR:Q10912"/>
<dbReference type="Proteomes" id="UP000001940">
    <property type="component" value="Chromosome II"/>
</dbReference>
<dbReference type="Bgee" id="WBGene00015004">
    <property type="expression patterns" value="Expressed in material anatomical entity and 2 other cell types or tissues"/>
</dbReference>
<accession>Q10912</accession>
<name>YSP4_CAEEL</name>
<sequence>MLSLTAHLVLISTIIVKCSAFSKKPSERAKPAAVKKAVEDKQPVKVTAFEQASLNEDKAEAMSNIEPSPKISNSTVPTAPTPKKEKKVVATTKKTERSVAQGPPLVSEHIKDEKKMPSVHKPIRKGSIYANELLTEKPLTDTEPELHPDNHVVKAKSPKPVARTPTARHRNALKPGKINDKSDDTLHDAPSIQKVGGPSYEDAASVNEKEKDVNPK</sequence>
<proteinExistence type="predicted"/>
<feature type="chain" id="PRO_0000065043" description="Uncharacterized protein B0034.4">
    <location>
        <begin position="1"/>
        <end position="216"/>
    </location>
</feature>
<feature type="region of interest" description="Disordered" evidence="1">
    <location>
        <begin position="55"/>
        <end position="216"/>
    </location>
</feature>
<feature type="compositionally biased region" description="Basic and acidic residues" evidence="1">
    <location>
        <begin position="134"/>
        <end position="152"/>
    </location>
</feature>
<feature type="compositionally biased region" description="Basic and acidic residues" evidence="1">
    <location>
        <begin position="177"/>
        <end position="187"/>
    </location>
</feature>
<feature type="compositionally biased region" description="Basic and acidic residues" evidence="1">
    <location>
        <begin position="207"/>
        <end position="216"/>
    </location>
</feature>
<protein>
    <recommendedName>
        <fullName>Uncharacterized protein B0034.4</fullName>
    </recommendedName>
</protein>
<gene>
    <name type="ORF">B0034.4</name>
</gene>
<reference key="1">
    <citation type="journal article" date="1998" name="Science">
        <title>Genome sequence of the nematode C. elegans: a platform for investigating biology.</title>
        <authorList>
            <consortium name="The C. elegans sequencing consortium"/>
        </authorList>
    </citation>
    <scope>NUCLEOTIDE SEQUENCE [LARGE SCALE GENOMIC DNA]</scope>
    <source>
        <strain>Bristol N2</strain>
    </source>
</reference>